<dbReference type="EMBL" id="AF303741">
    <property type="protein sequence ID" value="AAK81978.1"/>
    <property type="molecule type" value="Genomic_DNA"/>
</dbReference>
<dbReference type="RefSeq" id="NP_149507.1">
    <property type="nucleotide sequence ID" value="NC_003038.1"/>
</dbReference>
<dbReference type="KEGG" id="vg:1732971"/>
<dbReference type="Proteomes" id="UP000001359">
    <property type="component" value="Genome"/>
</dbReference>
<gene>
    <name type="ORF">IIV6-044R</name>
</gene>
<keyword id="KW-1185">Reference proteome</keyword>
<organismHost>
    <name type="scientific">Acheta domesticus</name>
    <name type="common">House cricket</name>
    <dbReference type="NCBI Taxonomy" id="6997"/>
</organismHost>
<organismHost>
    <name type="scientific">Chilo suppressalis</name>
    <name type="common">Asiatic rice borer moth</name>
    <dbReference type="NCBI Taxonomy" id="168631"/>
</organismHost>
<organismHost>
    <name type="scientific">Gryllus bimaculatus</name>
    <name type="common">Two-spotted cricket</name>
    <dbReference type="NCBI Taxonomy" id="6999"/>
</organismHost>
<organismHost>
    <name type="scientific">Gryllus campestris</name>
    <dbReference type="NCBI Taxonomy" id="58607"/>
</organismHost>
<organismHost>
    <name type="scientific">Spodoptera frugiperda</name>
    <name type="common">Fall armyworm</name>
    <dbReference type="NCBI Taxonomy" id="7108"/>
</organismHost>
<sequence>MYLYQKIKNCLLLTMYQKKNKSHMYDILQSYLYYQKPIPKNLYSHPKKNLYLNIHHYKNINKDLM</sequence>
<accession>Q91G54</accession>
<reference key="1">
    <citation type="journal article" date="2001" name="Virology">
        <title>Analysis of the first complete DNA sequence of an invertebrate iridovirus: coding strategy of the genome of Chilo iridescent virus.</title>
        <authorList>
            <person name="Jakob N.J."/>
            <person name="Mueller K."/>
            <person name="Bahr U."/>
            <person name="Darai G."/>
        </authorList>
    </citation>
    <scope>NUCLEOTIDE SEQUENCE [LARGE SCALE GENOMIC DNA]</scope>
</reference>
<reference key="2">
    <citation type="journal article" date="2007" name="Virol. J.">
        <title>Comparative genomic analysis of the family Iridoviridae: re-annotating and defining the core set of iridovirus genes.</title>
        <authorList>
            <person name="Eaton H.E."/>
            <person name="Metcalf J."/>
            <person name="Penny E."/>
            <person name="Tcherepanov V."/>
            <person name="Upton C."/>
            <person name="Brunetti C.R."/>
        </authorList>
    </citation>
    <scope>GENOME REANNOTATION</scope>
</reference>
<proteinExistence type="predicted"/>
<protein>
    <recommendedName>
        <fullName>Uncharacterized protein 044R</fullName>
    </recommendedName>
</protein>
<feature type="chain" id="PRO_0000377970" description="Uncharacterized protein 044R">
    <location>
        <begin position="1"/>
        <end position="65"/>
    </location>
</feature>
<name>044R_IIV6</name>
<organism>
    <name type="scientific">Invertebrate iridescent virus 6</name>
    <name type="common">IIV-6</name>
    <name type="synonym">Chilo iridescent virus</name>
    <dbReference type="NCBI Taxonomy" id="176652"/>
    <lineage>
        <taxon>Viruses</taxon>
        <taxon>Varidnaviria</taxon>
        <taxon>Bamfordvirae</taxon>
        <taxon>Nucleocytoviricota</taxon>
        <taxon>Megaviricetes</taxon>
        <taxon>Pimascovirales</taxon>
        <taxon>Iridoviridae</taxon>
        <taxon>Betairidovirinae</taxon>
        <taxon>Iridovirus</taxon>
    </lineage>
</organism>